<sequence length="247" mass="28219">MSNLLLALNIDHIATVRNARGTQYPDPVYAAYIAEQSGIDGITVHLREDRRHITDRDVKLLREIVQTTMNLEMAATDEMVMIACQLKPHYCCLVPERRRELTTEGGLDLIYQIDKMQNIVLKLSDAGIRVSLFIDPDIEQIDASYKIGVRCIELNTGKYAESKNKEDRILEYRRIEKSIKHALSYGLMINAGHGLNYDNVKFIAMLSQIRELNIGHAIVSRAVFCGLPKAIKDMKELLKEFRKKDDQ</sequence>
<feature type="chain" id="PRO_0000231785" description="Pyridoxine 5'-phosphate synthase">
    <location>
        <begin position="1"/>
        <end position="247"/>
    </location>
</feature>
<feature type="active site" description="Proton acceptor" evidence="1">
    <location>
        <position position="45"/>
    </location>
</feature>
<feature type="active site" description="Proton acceptor" evidence="1">
    <location>
        <position position="72"/>
    </location>
</feature>
<feature type="active site" description="Proton donor" evidence="1">
    <location>
        <position position="193"/>
    </location>
</feature>
<feature type="binding site" evidence="1">
    <location>
        <position position="9"/>
    </location>
    <ligand>
        <name>3-amino-2-oxopropyl phosphate</name>
        <dbReference type="ChEBI" id="CHEBI:57279"/>
    </ligand>
</feature>
<feature type="binding site" evidence="1">
    <location>
        <begin position="11"/>
        <end position="12"/>
    </location>
    <ligand>
        <name>1-deoxy-D-xylulose 5-phosphate</name>
        <dbReference type="ChEBI" id="CHEBI:57792"/>
    </ligand>
</feature>
<feature type="binding site" evidence="1">
    <location>
        <position position="20"/>
    </location>
    <ligand>
        <name>3-amino-2-oxopropyl phosphate</name>
        <dbReference type="ChEBI" id="CHEBI:57279"/>
    </ligand>
</feature>
<feature type="binding site" evidence="1">
    <location>
        <position position="47"/>
    </location>
    <ligand>
        <name>1-deoxy-D-xylulose 5-phosphate</name>
        <dbReference type="ChEBI" id="CHEBI:57792"/>
    </ligand>
</feature>
<feature type="binding site" evidence="1">
    <location>
        <position position="52"/>
    </location>
    <ligand>
        <name>1-deoxy-D-xylulose 5-phosphate</name>
        <dbReference type="ChEBI" id="CHEBI:57792"/>
    </ligand>
</feature>
<feature type="binding site" evidence="1">
    <location>
        <position position="102"/>
    </location>
    <ligand>
        <name>1-deoxy-D-xylulose 5-phosphate</name>
        <dbReference type="ChEBI" id="CHEBI:57792"/>
    </ligand>
</feature>
<feature type="binding site" evidence="1">
    <location>
        <position position="194"/>
    </location>
    <ligand>
        <name>3-amino-2-oxopropyl phosphate</name>
        <dbReference type="ChEBI" id="CHEBI:57279"/>
    </ligand>
</feature>
<feature type="binding site" evidence="1">
    <location>
        <begin position="215"/>
        <end position="216"/>
    </location>
    <ligand>
        <name>3-amino-2-oxopropyl phosphate</name>
        <dbReference type="ChEBI" id="CHEBI:57279"/>
    </ligand>
</feature>
<feature type="site" description="Transition state stabilizer" evidence="1">
    <location>
        <position position="153"/>
    </location>
</feature>
<accession>Q7VRR1</accession>
<dbReference type="EC" id="2.6.99.2" evidence="1"/>
<dbReference type="EMBL" id="BX248583">
    <property type="protein sequence ID" value="CAD83225.1"/>
    <property type="molecule type" value="Genomic_DNA"/>
</dbReference>
<dbReference type="SMR" id="Q7VRR1"/>
<dbReference type="STRING" id="203907.Bfl539"/>
<dbReference type="KEGG" id="bfl:Bfl539"/>
<dbReference type="eggNOG" id="COG0854">
    <property type="taxonomic scope" value="Bacteria"/>
</dbReference>
<dbReference type="HOGENOM" id="CLU_074563_0_0_6"/>
<dbReference type="OrthoDB" id="9806590at2"/>
<dbReference type="UniPathway" id="UPA00244">
    <property type="reaction ID" value="UER00313"/>
</dbReference>
<dbReference type="Proteomes" id="UP000002192">
    <property type="component" value="Chromosome"/>
</dbReference>
<dbReference type="GO" id="GO:0005829">
    <property type="term" value="C:cytosol"/>
    <property type="evidence" value="ECO:0007669"/>
    <property type="project" value="TreeGrafter"/>
</dbReference>
<dbReference type="GO" id="GO:0033856">
    <property type="term" value="F:pyridoxine 5'-phosphate synthase activity"/>
    <property type="evidence" value="ECO:0007669"/>
    <property type="project" value="UniProtKB-EC"/>
</dbReference>
<dbReference type="GO" id="GO:0008615">
    <property type="term" value="P:pyridoxine biosynthetic process"/>
    <property type="evidence" value="ECO:0007669"/>
    <property type="project" value="UniProtKB-UniRule"/>
</dbReference>
<dbReference type="CDD" id="cd00003">
    <property type="entry name" value="PNPsynthase"/>
    <property type="match status" value="1"/>
</dbReference>
<dbReference type="Gene3D" id="3.20.20.70">
    <property type="entry name" value="Aldolase class I"/>
    <property type="match status" value="1"/>
</dbReference>
<dbReference type="HAMAP" id="MF_00279">
    <property type="entry name" value="PdxJ"/>
    <property type="match status" value="1"/>
</dbReference>
<dbReference type="InterPro" id="IPR013785">
    <property type="entry name" value="Aldolase_TIM"/>
</dbReference>
<dbReference type="InterPro" id="IPR004569">
    <property type="entry name" value="PyrdxlP_synth_PdxJ"/>
</dbReference>
<dbReference type="InterPro" id="IPR036130">
    <property type="entry name" value="Pyridoxine-5'_phos_synth"/>
</dbReference>
<dbReference type="NCBIfam" id="TIGR00559">
    <property type="entry name" value="pdxJ"/>
    <property type="match status" value="1"/>
</dbReference>
<dbReference type="NCBIfam" id="NF003623">
    <property type="entry name" value="PRK05265.1-1"/>
    <property type="match status" value="1"/>
</dbReference>
<dbReference type="NCBIfam" id="NF003624">
    <property type="entry name" value="PRK05265.1-2"/>
    <property type="match status" value="1"/>
</dbReference>
<dbReference type="NCBIfam" id="NF003625">
    <property type="entry name" value="PRK05265.1-3"/>
    <property type="match status" value="1"/>
</dbReference>
<dbReference type="NCBIfam" id="NF003627">
    <property type="entry name" value="PRK05265.1-5"/>
    <property type="match status" value="1"/>
</dbReference>
<dbReference type="PANTHER" id="PTHR30456">
    <property type="entry name" value="PYRIDOXINE 5'-PHOSPHATE SYNTHASE"/>
    <property type="match status" value="1"/>
</dbReference>
<dbReference type="PANTHER" id="PTHR30456:SF0">
    <property type="entry name" value="PYRIDOXINE 5'-PHOSPHATE SYNTHASE"/>
    <property type="match status" value="1"/>
</dbReference>
<dbReference type="Pfam" id="PF03740">
    <property type="entry name" value="PdxJ"/>
    <property type="match status" value="1"/>
</dbReference>
<dbReference type="SUPFAM" id="SSF63892">
    <property type="entry name" value="Pyridoxine 5'-phosphate synthase"/>
    <property type="match status" value="1"/>
</dbReference>
<organism>
    <name type="scientific">Blochmanniella floridana</name>
    <dbReference type="NCBI Taxonomy" id="203907"/>
    <lineage>
        <taxon>Bacteria</taxon>
        <taxon>Pseudomonadati</taxon>
        <taxon>Pseudomonadota</taxon>
        <taxon>Gammaproteobacteria</taxon>
        <taxon>Enterobacterales</taxon>
        <taxon>Enterobacteriaceae</taxon>
        <taxon>ant endosymbionts</taxon>
        <taxon>Candidatus Blochmanniella</taxon>
    </lineage>
</organism>
<gene>
    <name evidence="1" type="primary">pdxJ</name>
    <name type="ordered locus">Bfl539</name>
</gene>
<comment type="function">
    <text evidence="1">Catalyzes the complicated ring closure reaction between the two acyclic compounds 1-deoxy-D-xylulose-5-phosphate (DXP) and 3-amino-2-oxopropyl phosphate (1-amino-acetone-3-phosphate or AAP) to form pyridoxine 5'-phosphate (PNP) and inorganic phosphate.</text>
</comment>
<comment type="catalytic activity">
    <reaction evidence="1">
        <text>3-amino-2-oxopropyl phosphate + 1-deoxy-D-xylulose 5-phosphate = pyridoxine 5'-phosphate + phosphate + 2 H2O + H(+)</text>
        <dbReference type="Rhea" id="RHEA:15265"/>
        <dbReference type="ChEBI" id="CHEBI:15377"/>
        <dbReference type="ChEBI" id="CHEBI:15378"/>
        <dbReference type="ChEBI" id="CHEBI:43474"/>
        <dbReference type="ChEBI" id="CHEBI:57279"/>
        <dbReference type="ChEBI" id="CHEBI:57792"/>
        <dbReference type="ChEBI" id="CHEBI:58589"/>
        <dbReference type="EC" id="2.6.99.2"/>
    </reaction>
</comment>
<comment type="pathway">
    <text evidence="1">Cofactor biosynthesis; pyridoxine 5'-phosphate biosynthesis; pyridoxine 5'-phosphate from D-erythrose 4-phosphate: step 5/5.</text>
</comment>
<comment type="subunit">
    <text evidence="1">Homooctamer; tetramer of dimers.</text>
</comment>
<comment type="subcellular location">
    <subcellularLocation>
        <location evidence="1">Cytoplasm</location>
    </subcellularLocation>
</comment>
<comment type="similarity">
    <text evidence="1">Belongs to the PNP synthase family.</text>
</comment>
<protein>
    <recommendedName>
        <fullName evidence="1">Pyridoxine 5'-phosphate synthase</fullName>
        <shortName evidence="1">PNP synthase</shortName>
        <ecNumber evidence="1">2.6.99.2</ecNumber>
    </recommendedName>
</protein>
<name>PDXJ_BLOFL</name>
<proteinExistence type="inferred from homology"/>
<reference key="1">
    <citation type="journal article" date="2003" name="Proc. Natl. Acad. Sci. U.S.A.">
        <title>The genome sequence of Blochmannia floridanus: comparative analysis of reduced genomes.</title>
        <authorList>
            <person name="Gil R."/>
            <person name="Silva F.J."/>
            <person name="Zientz E."/>
            <person name="Delmotte F."/>
            <person name="Gonzalez-Candelas F."/>
            <person name="Latorre A."/>
            <person name="Rausell C."/>
            <person name="Kamerbeek J."/>
            <person name="Gadau J."/>
            <person name="Hoelldobler B."/>
            <person name="van Ham R.C.H.J."/>
            <person name="Gross R."/>
            <person name="Moya A."/>
        </authorList>
    </citation>
    <scope>NUCLEOTIDE SEQUENCE [LARGE SCALE GENOMIC DNA]</scope>
</reference>
<evidence type="ECO:0000255" key="1">
    <source>
        <dbReference type="HAMAP-Rule" id="MF_00279"/>
    </source>
</evidence>
<keyword id="KW-0963">Cytoplasm</keyword>
<keyword id="KW-0664">Pyridoxine biosynthesis</keyword>
<keyword id="KW-1185">Reference proteome</keyword>
<keyword id="KW-0808">Transferase</keyword>